<dbReference type="EMBL" id="DQ139877">
    <property type="protein sequence ID" value="AAZ75583.1"/>
    <property type="molecule type" value="mRNA"/>
</dbReference>
<dbReference type="SMR" id="Q2XXR8"/>
<dbReference type="GO" id="GO:0005576">
    <property type="term" value="C:extracellular region"/>
    <property type="evidence" value="ECO:0007669"/>
    <property type="project" value="UniProtKB-SubCell"/>
</dbReference>
<dbReference type="GO" id="GO:0090729">
    <property type="term" value="F:toxin activity"/>
    <property type="evidence" value="ECO:0007669"/>
    <property type="project" value="UniProtKB-KW"/>
</dbReference>
<dbReference type="GO" id="GO:0001935">
    <property type="term" value="P:endothelial cell proliferation"/>
    <property type="evidence" value="ECO:0007669"/>
    <property type="project" value="TreeGrafter"/>
</dbReference>
<dbReference type="Gene3D" id="2.10.80.10">
    <property type="entry name" value="Lipase, subunit A"/>
    <property type="match status" value="1"/>
</dbReference>
<dbReference type="InterPro" id="IPR009523">
    <property type="entry name" value="Prokineticin"/>
</dbReference>
<dbReference type="InterPro" id="IPR023569">
    <property type="entry name" value="Prokineticin_domain"/>
</dbReference>
<dbReference type="PANTHER" id="PTHR18821">
    <property type="entry name" value="PROKINETICIN"/>
    <property type="match status" value="1"/>
</dbReference>
<dbReference type="PANTHER" id="PTHR18821:SF8">
    <property type="entry name" value="PROKINETICIN-2"/>
    <property type="match status" value="1"/>
</dbReference>
<dbReference type="Pfam" id="PF06607">
    <property type="entry name" value="Prokineticin"/>
    <property type="match status" value="1"/>
</dbReference>
<dbReference type="SUPFAM" id="SSF57190">
    <property type="entry name" value="Colipase-like"/>
    <property type="match status" value="2"/>
</dbReference>
<protein>
    <recommendedName>
        <fullName evidence="4">AVIToxin-VAR1</fullName>
    </recommendedName>
</protein>
<sequence length="104" mass="11217">MRSLLCAPLLLLLLSAGESAVITGACDKDLQCGEGMCCAVSLWIRSIRICTPLGSSGEDCHPLSHKVPFDGQRKHHTCPCLPNLVCGQTSPGKYKCLPEFKNVF</sequence>
<proteinExistence type="evidence at transcript level"/>
<comment type="function">
    <text evidence="2">Potent agonist for both PKR1/PROKR1 and PKR2/PROKR2. Potently contracts gastrointestinal (GI) smooth muscle.</text>
</comment>
<comment type="subcellular location">
    <subcellularLocation>
        <location evidence="1">Secreted</location>
    </subcellularLocation>
</comment>
<comment type="tissue specificity">
    <text>Expressed by the venom gland.</text>
</comment>
<comment type="similarity">
    <text evidence="3">Belongs to the AVIT (prokineticin) family.</text>
</comment>
<feature type="signal peptide" evidence="1">
    <location>
        <begin position="1"/>
        <end position="19"/>
    </location>
</feature>
<feature type="chain" id="PRO_0000267482" description="AVIToxin-VAR1">
    <location>
        <begin position="20"/>
        <end position="104"/>
    </location>
</feature>
<feature type="disulfide bond" evidence="2">
    <location>
        <begin position="26"/>
        <end position="38"/>
    </location>
</feature>
<feature type="disulfide bond" evidence="2">
    <location>
        <begin position="32"/>
        <end position="50"/>
    </location>
</feature>
<feature type="disulfide bond" evidence="2">
    <location>
        <begin position="37"/>
        <end position="78"/>
    </location>
</feature>
<feature type="disulfide bond" evidence="2">
    <location>
        <begin position="60"/>
        <end position="86"/>
    </location>
</feature>
<feature type="disulfide bond" evidence="2">
    <location>
        <begin position="80"/>
        <end position="96"/>
    </location>
</feature>
<accession>Q2XXR8</accession>
<name>VAR1_VARVA</name>
<reference key="1">
    <citation type="journal article" date="2006" name="Nature">
        <title>Early evolution of the venom system in lizards and snakes.</title>
        <authorList>
            <person name="Fry B.G."/>
            <person name="Vidal N."/>
            <person name="Norman J.A."/>
            <person name="Vonk F.J."/>
            <person name="Scheib H."/>
            <person name="Ramjan S.F.R."/>
            <person name="Kuruppu S."/>
            <person name="Fung K."/>
            <person name="Blair Hedges S."/>
            <person name="Richardson M.K."/>
            <person name="Hodgson W.C."/>
            <person name="Ignjatovic V."/>
            <person name="Summerhayes R."/>
            <person name="Kochva E."/>
        </authorList>
    </citation>
    <scope>NUCLEOTIDE SEQUENCE [LARGE SCALE MRNA]</scope>
    <source>
        <tissue>Venom gland</tissue>
    </source>
</reference>
<keyword id="KW-1015">Disulfide bond</keyword>
<keyword id="KW-1213">G-protein coupled receptor impairing toxin</keyword>
<keyword id="KW-0964">Secreted</keyword>
<keyword id="KW-0732">Signal</keyword>
<keyword id="KW-0800">Toxin</keyword>
<evidence type="ECO:0000250" key="1"/>
<evidence type="ECO:0000250" key="2">
    <source>
        <dbReference type="UniProtKB" id="P25687"/>
    </source>
</evidence>
<evidence type="ECO:0000305" key="3"/>
<evidence type="ECO:0000312" key="4">
    <source>
        <dbReference type="EMBL" id="AAZ75583.1"/>
    </source>
</evidence>
<organism>
    <name type="scientific">Varanus varius</name>
    <name type="common">Lace monitor lizard</name>
    <name type="synonym">Lacerta varia</name>
    <dbReference type="NCBI Taxonomy" id="8559"/>
    <lineage>
        <taxon>Eukaryota</taxon>
        <taxon>Metazoa</taxon>
        <taxon>Chordata</taxon>
        <taxon>Craniata</taxon>
        <taxon>Vertebrata</taxon>
        <taxon>Euteleostomi</taxon>
        <taxon>Lepidosauria</taxon>
        <taxon>Squamata</taxon>
        <taxon>Bifurcata</taxon>
        <taxon>Unidentata</taxon>
        <taxon>Episquamata</taxon>
        <taxon>Toxicofera</taxon>
        <taxon>Anguimorpha</taxon>
        <taxon>Paleoanguimorpha</taxon>
        <taxon>Varanoidea</taxon>
        <taxon>Varanidae</taxon>
        <taxon>Varanus</taxon>
    </lineage>
</organism>